<protein>
    <recommendedName>
        <fullName evidence="3">UDP-glucuronate 4-epimerase</fullName>
        <shortName evidence="3">UGA4E</shortName>
        <ecNumber evidence="2">5.1.3.6</ecNumber>
    </recommendedName>
    <alternativeName>
        <fullName evidence="3">TgUGAE</fullName>
    </alternativeName>
</protein>
<organism>
    <name type="scientific">Thermodesulfobacterium geofontis (strain OPF15)</name>
    <dbReference type="NCBI Taxonomy" id="795359"/>
    <lineage>
        <taxon>Bacteria</taxon>
        <taxon>Pseudomonadati</taxon>
        <taxon>Thermodesulfobacteriota</taxon>
        <taxon>Thermodesulfobacteria</taxon>
        <taxon>Thermodesulfobacteriales</taxon>
        <taxon>Thermodesulfobacteriaceae</taxon>
        <taxon>Thermodesulfobacterium</taxon>
    </lineage>
</organism>
<keyword id="KW-0413">Isomerase</keyword>
<keyword id="KW-0520">NAD</keyword>
<keyword id="KW-1185">Reference proteome</keyword>
<dbReference type="EC" id="5.1.3.6" evidence="2"/>
<dbReference type="EMBL" id="CP002829">
    <property type="protein sequence ID" value="AEH22762.1"/>
    <property type="molecule type" value="Genomic_DNA"/>
</dbReference>
<dbReference type="RefSeq" id="WP_013909462.1">
    <property type="nucleotide sequence ID" value="NC_015682.1"/>
</dbReference>
<dbReference type="SMR" id="F8C4X8"/>
<dbReference type="STRING" id="795359.TOPB45_0660"/>
<dbReference type="KEGG" id="top:TOPB45_0660"/>
<dbReference type="PATRIC" id="fig|795359.3.peg.670"/>
<dbReference type="eggNOG" id="COG0451">
    <property type="taxonomic scope" value="Bacteria"/>
</dbReference>
<dbReference type="HOGENOM" id="CLU_007383_1_7_0"/>
<dbReference type="OrthoDB" id="9801785at2"/>
<dbReference type="Proteomes" id="UP000006583">
    <property type="component" value="Chromosome"/>
</dbReference>
<dbReference type="GO" id="GO:0050378">
    <property type="term" value="F:UDP-glucuronate 4-epimerase activity"/>
    <property type="evidence" value="ECO:0007669"/>
    <property type="project" value="UniProtKB-EC"/>
</dbReference>
<dbReference type="Gene3D" id="3.40.50.720">
    <property type="entry name" value="NAD(P)-binding Rossmann-like Domain"/>
    <property type="match status" value="1"/>
</dbReference>
<dbReference type="InterPro" id="IPR016040">
    <property type="entry name" value="NAD(P)-bd_dom"/>
</dbReference>
<dbReference type="InterPro" id="IPR036291">
    <property type="entry name" value="NAD(P)-bd_dom_sf"/>
</dbReference>
<dbReference type="PANTHER" id="PTHR43574">
    <property type="entry name" value="EPIMERASE-RELATED"/>
    <property type="match status" value="1"/>
</dbReference>
<dbReference type="Pfam" id="PF16363">
    <property type="entry name" value="GDP_Man_Dehyd"/>
    <property type="match status" value="1"/>
</dbReference>
<dbReference type="PRINTS" id="PR01713">
    <property type="entry name" value="NUCEPIMERASE"/>
</dbReference>
<dbReference type="SUPFAM" id="SSF51735">
    <property type="entry name" value="NAD(P)-binding Rossmann-fold domains"/>
    <property type="match status" value="1"/>
</dbReference>
<accession>F8C4X8</accession>
<feature type="chain" id="PRO_0000450328" description="UDP-glucuronate 4-epimerase">
    <location>
        <begin position="1"/>
        <end position="323"/>
    </location>
</feature>
<feature type="active site" description="Proton acceptor" evidence="1">
    <location>
        <position position="152"/>
    </location>
</feature>
<feature type="binding site" evidence="1">
    <location>
        <begin position="11"/>
        <end position="13"/>
    </location>
    <ligand>
        <name>NAD(+)</name>
        <dbReference type="ChEBI" id="CHEBI:57540"/>
    </ligand>
</feature>
<feature type="binding site" evidence="1">
    <location>
        <position position="156"/>
    </location>
    <ligand>
        <name>NAD(+)</name>
        <dbReference type="ChEBI" id="CHEBI:57540"/>
    </ligand>
</feature>
<reference key="1">
    <citation type="journal article" date="2013" name="Genome Announc.">
        <title>Complete genome sequence of the hyperthermophilic sulfate-reducing bacterium Thermodesulfobacterium geofontis OPF15T.</title>
        <authorList>
            <person name="Elkins J.G."/>
            <person name="Hamilton-Brehm S.D."/>
            <person name="Lucas S."/>
            <person name="Han J."/>
            <person name="Lapidus A."/>
            <person name="Cheng J.F."/>
            <person name="Goodwin L.A."/>
            <person name="Pitluck S."/>
            <person name="Peters L."/>
            <person name="Mikhailova N."/>
            <person name="Davenport K.W."/>
            <person name="Detter J.C."/>
            <person name="Han C.S."/>
            <person name="Tapia R."/>
            <person name="Land M.L."/>
            <person name="Hauser L."/>
            <person name="Kyrpides N.C."/>
            <person name="Ivanova N.N."/>
            <person name="Pagani I."/>
            <person name="Bruce D."/>
            <person name="Woyke T."/>
            <person name="Cottingham R.W."/>
        </authorList>
    </citation>
    <scope>NUCLEOTIDE SEQUENCE [LARGE SCALE GENOMIC DNA]</scope>
    <source>
        <strain>OPF15</strain>
    </source>
</reference>
<reference key="2">
    <citation type="journal article" date="2020" name="Catalysts">
        <title>Novel insights into the existence of the putative UDP-glucuronate 5-epimerase specificity.</title>
        <authorList>
            <person name="Gevaert O."/>
            <person name="Van Overtveldt S."/>
            <person name="Da Costa M."/>
            <person name="Beerens K."/>
            <person name="Desmet T."/>
        </authorList>
    </citation>
    <scope>FUNCTION</scope>
    <scope>CATALYTIC ACTIVITY</scope>
</reference>
<proteinExistence type="evidence at protein level"/>
<sequence length="323" mass="36622">MGYYLVTGVAGFIGWRVGEFLLKEGKAVLGVDNLNDAYDVTLKYWRLNELKKSENFKFYQIDITNFQALKTIFETYSISAVIHLAARAGVRASLENPWVYVDSNITGTLNLLELMKDFGVKKLVLASTSSIYAGQSPPFHEDLKVDTPLSPYAATKKGAELLSYTYHHLYGLDISVVRYFTVYGPAGRPDMSIFRFIKWIYEEKPIKIFGDGTQARDFTYIDDIARGTIASLKPLGYEIINLGGGKNPISINQIIEILERLIGKKAKREYLNFHKADVKVTWADISKAKKLLNWEPEISIEEGLKRTVNWSKENIELIKSIKV</sequence>
<name>UGA4E_THEGP</name>
<comment type="function">
    <text evidence="2">Catalyzes the interconversion of UDP-D-glucuronic acid (UDP-GlcA) and UDP-D-galacturonic acid (UDP-GalA).</text>
</comment>
<comment type="catalytic activity">
    <reaction evidence="2">
        <text>UDP-alpha-D-glucuronate = UDP-alpha-D-galacturonate</text>
        <dbReference type="Rhea" id="RHEA:11404"/>
        <dbReference type="ChEBI" id="CHEBI:57635"/>
        <dbReference type="ChEBI" id="CHEBI:58052"/>
        <dbReference type="EC" id="5.1.3.6"/>
    </reaction>
</comment>
<comment type="cofactor">
    <cofactor evidence="1">
        <name>NAD(+)</name>
        <dbReference type="ChEBI" id="CHEBI:57540"/>
    </cofactor>
</comment>
<comment type="similarity">
    <text evidence="4">Belongs to the NAD(P)-dependent epimerase/dehydratase family.</text>
</comment>
<evidence type="ECO:0000250" key="1">
    <source>
        <dbReference type="UniProtKB" id="Q14376"/>
    </source>
</evidence>
<evidence type="ECO:0000269" key="2">
    <source ref="2"/>
</evidence>
<evidence type="ECO:0000303" key="3">
    <source ref="2"/>
</evidence>
<evidence type="ECO:0000305" key="4"/>
<evidence type="ECO:0000312" key="5">
    <source>
        <dbReference type="EMBL" id="AEH22762.1"/>
    </source>
</evidence>
<gene>
    <name evidence="5" type="ordered locus">TOPB45_0660</name>
</gene>